<proteinExistence type="inferred from homology"/>
<organism>
    <name type="scientific">Shewanella woodyi (strain ATCC 51908 / MS32)</name>
    <dbReference type="NCBI Taxonomy" id="392500"/>
    <lineage>
        <taxon>Bacteria</taxon>
        <taxon>Pseudomonadati</taxon>
        <taxon>Pseudomonadota</taxon>
        <taxon>Gammaproteobacteria</taxon>
        <taxon>Alteromonadales</taxon>
        <taxon>Shewanellaceae</taxon>
        <taxon>Shewanella</taxon>
    </lineage>
</organism>
<feature type="initiator methionine" description="Removed" evidence="1">
    <location>
        <position position="1"/>
    </location>
</feature>
<feature type="chain" id="PRO_1000094078" description="Formamidopyrimidine-DNA glycosylase">
    <location>
        <begin position="2"/>
        <end position="271"/>
    </location>
</feature>
<feature type="zinc finger region" description="FPG-type" evidence="2">
    <location>
        <begin position="236"/>
        <end position="270"/>
    </location>
</feature>
<feature type="active site" description="Schiff-base intermediate with DNA" evidence="2">
    <location>
        <position position="2"/>
    </location>
</feature>
<feature type="active site" description="Proton donor" evidence="2">
    <location>
        <position position="3"/>
    </location>
</feature>
<feature type="active site" description="Proton donor; for beta-elimination activity" evidence="2">
    <location>
        <position position="57"/>
    </location>
</feature>
<feature type="active site" description="Proton donor; for delta-elimination activity" evidence="2">
    <location>
        <position position="260"/>
    </location>
</feature>
<feature type="binding site" evidence="2">
    <location>
        <position position="90"/>
    </location>
    <ligand>
        <name>DNA</name>
        <dbReference type="ChEBI" id="CHEBI:16991"/>
    </ligand>
</feature>
<feature type="binding site" evidence="2">
    <location>
        <position position="109"/>
    </location>
    <ligand>
        <name>DNA</name>
        <dbReference type="ChEBI" id="CHEBI:16991"/>
    </ligand>
</feature>
<feature type="binding site" evidence="2">
    <location>
        <position position="151"/>
    </location>
    <ligand>
        <name>DNA</name>
        <dbReference type="ChEBI" id="CHEBI:16991"/>
    </ligand>
</feature>
<dbReference type="EC" id="3.2.2.23" evidence="2"/>
<dbReference type="EC" id="4.2.99.18" evidence="2"/>
<dbReference type="EMBL" id="CP000961">
    <property type="protein sequence ID" value="ACA84379.1"/>
    <property type="molecule type" value="Genomic_DNA"/>
</dbReference>
<dbReference type="RefSeq" id="WP_012322728.1">
    <property type="nucleotide sequence ID" value="NC_010506.1"/>
</dbReference>
<dbReference type="SMR" id="B1KL38"/>
<dbReference type="STRING" id="392500.Swoo_0078"/>
<dbReference type="KEGG" id="swd:Swoo_0078"/>
<dbReference type="eggNOG" id="COG0266">
    <property type="taxonomic scope" value="Bacteria"/>
</dbReference>
<dbReference type="HOGENOM" id="CLU_038423_1_1_6"/>
<dbReference type="Proteomes" id="UP000002168">
    <property type="component" value="Chromosome"/>
</dbReference>
<dbReference type="GO" id="GO:0034039">
    <property type="term" value="F:8-oxo-7,8-dihydroguanine DNA N-glycosylase activity"/>
    <property type="evidence" value="ECO:0007669"/>
    <property type="project" value="TreeGrafter"/>
</dbReference>
<dbReference type="GO" id="GO:0140078">
    <property type="term" value="F:class I DNA-(apurinic or apyrimidinic site) endonuclease activity"/>
    <property type="evidence" value="ECO:0007669"/>
    <property type="project" value="UniProtKB-EC"/>
</dbReference>
<dbReference type="GO" id="GO:0003684">
    <property type="term" value="F:damaged DNA binding"/>
    <property type="evidence" value="ECO:0007669"/>
    <property type="project" value="InterPro"/>
</dbReference>
<dbReference type="GO" id="GO:0008270">
    <property type="term" value="F:zinc ion binding"/>
    <property type="evidence" value="ECO:0007669"/>
    <property type="project" value="UniProtKB-UniRule"/>
</dbReference>
<dbReference type="GO" id="GO:0006284">
    <property type="term" value="P:base-excision repair"/>
    <property type="evidence" value="ECO:0007669"/>
    <property type="project" value="InterPro"/>
</dbReference>
<dbReference type="CDD" id="cd08966">
    <property type="entry name" value="EcFpg-like_N"/>
    <property type="match status" value="1"/>
</dbReference>
<dbReference type="FunFam" id="1.10.8.50:FF:000003">
    <property type="entry name" value="Formamidopyrimidine-DNA glycosylase"/>
    <property type="match status" value="1"/>
</dbReference>
<dbReference type="FunFam" id="3.20.190.10:FF:000001">
    <property type="entry name" value="Formamidopyrimidine-DNA glycosylase"/>
    <property type="match status" value="1"/>
</dbReference>
<dbReference type="Gene3D" id="1.10.8.50">
    <property type="match status" value="1"/>
</dbReference>
<dbReference type="Gene3D" id="3.20.190.10">
    <property type="entry name" value="MutM-like, N-terminal"/>
    <property type="match status" value="1"/>
</dbReference>
<dbReference type="HAMAP" id="MF_00103">
    <property type="entry name" value="Fapy_DNA_glycosyl"/>
    <property type="match status" value="1"/>
</dbReference>
<dbReference type="InterPro" id="IPR015886">
    <property type="entry name" value="DNA_glyclase/AP_lyase_DNA-bd"/>
</dbReference>
<dbReference type="InterPro" id="IPR015887">
    <property type="entry name" value="DNA_glyclase_Znf_dom_DNA_BS"/>
</dbReference>
<dbReference type="InterPro" id="IPR020629">
    <property type="entry name" value="Formamido-pyr_DNA_Glyclase"/>
</dbReference>
<dbReference type="InterPro" id="IPR012319">
    <property type="entry name" value="FPG_cat"/>
</dbReference>
<dbReference type="InterPro" id="IPR035937">
    <property type="entry name" value="MutM-like_N-ter"/>
</dbReference>
<dbReference type="InterPro" id="IPR010979">
    <property type="entry name" value="Ribosomal_uS13-like_H2TH"/>
</dbReference>
<dbReference type="InterPro" id="IPR000214">
    <property type="entry name" value="Znf_DNA_glyclase/AP_lyase"/>
</dbReference>
<dbReference type="InterPro" id="IPR010663">
    <property type="entry name" value="Znf_FPG/IleRS"/>
</dbReference>
<dbReference type="NCBIfam" id="TIGR00577">
    <property type="entry name" value="fpg"/>
    <property type="match status" value="1"/>
</dbReference>
<dbReference type="NCBIfam" id="NF002211">
    <property type="entry name" value="PRK01103.1"/>
    <property type="match status" value="1"/>
</dbReference>
<dbReference type="PANTHER" id="PTHR22993">
    <property type="entry name" value="FORMAMIDOPYRIMIDINE-DNA GLYCOSYLASE"/>
    <property type="match status" value="1"/>
</dbReference>
<dbReference type="PANTHER" id="PTHR22993:SF9">
    <property type="entry name" value="FORMAMIDOPYRIMIDINE-DNA GLYCOSYLASE"/>
    <property type="match status" value="1"/>
</dbReference>
<dbReference type="Pfam" id="PF01149">
    <property type="entry name" value="Fapy_DNA_glyco"/>
    <property type="match status" value="1"/>
</dbReference>
<dbReference type="Pfam" id="PF06831">
    <property type="entry name" value="H2TH"/>
    <property type="match status" value="1"/>
</dbReference>
<dbReference type="Pfam" id="PF06827">
    <property type="entry name" value="zf-FPG_IleRS"/>
    <property type="match status" value="1"/>
</dbReference>
<dbReference type="SMART" id="SM00898">
    <property type="entry name" value="Fapy_DNA_glyco"/>
    <property type="match status" value="1"/>
</dbReference>
<dbReference type="SMART" id="SM01232">
    <property type="entry name" value="H2TH"/>
    <property type="match status" value="1"/>
</dbReference>
<dbReference type="SUPFAM" id="SSF57716">
    <property type="entry name" value="Glucocorticoid receptor-like (DNA-binding domain)"/>
    <property type="match status" value="1"/>
</dbReference>
<dbReference type="SUPFAM" id="SSF81624">
    <property type="entry name" value="N-terminal domain of MutM-like DNA repair proteins"/>
    <property type="match status" value="1"/>
</dbReference>
<dbReference type="SUPFAM" id="SSF46946">
    <property type="entry name" value="S13-like H2TH domain"/>
    <property type="match status" value="1"/>
</dbReference>
<dbReference type="PROSITE" id="PS51068">
    <property type="entry name" value="FPG_CAT"/>
    <property type="match status" value="1"/>
</dbReference>
<dbReference type="PROSITE" id="PS01242">
    <property type="entry name" value="ZF_FPG_1"/>
    <property type="match status" value="1"/>
</dbReference>
<dbReference type="PROSITE" id="PS51066">
    <property type="entry name" value="ZF_FPG_2"/>
    <property type="match status" value="1"/>
</dbReference>
<comment type="function">
    <text evidence="2">Involved in base excision repair of DNA damaged by oxidation or by mutagenic agents. Acts as a DNA glycosylase that recognizes and removes damaged bases. Has a preference for oxidized purines, such as 7,8-dihydro-8-oxoguanine (8-oxoG). Has AP (apurinic/apyrimidinic) lyase activity and introduces nicks in the DNA strand. Cleaves the DNA backbone by beta-delta elimination to generate a single-strand break at the site of the removed base with both 3'- and 5'-phosphates.</text>
</comment>
<comment type="catalytic activity">
    <reaction evidence="2">
        <text>Hydrolysis of DNA containing ring-opened 7-methylguanine residues, releasing 2,6-diamino-4-hydroxy-5-(N-methyl)formamidopyrimidine.</text>
        <dbReference type="EC" id="3.2.2.23"/>
    </reaction>
</comment>
<comment type="catalytic activity">
    <reaction evidence="2">
        <text>2'-deoxyribonucleotide-(2'-deoxyribose 5'-phosphate)-2'-deoxyribonucleotide-DNA = a 3'-end 2'-deoxyribonucleotide-(2,3-dehydro-2,3-deoxyribose 5'-phosphate)-DNA + a 5'-end 5'-phospho-2'-deoxyribonucleoside-DNA + H(+)</text>
        <dbReference type="Rhea" id="RHEA:66592"/>
        <dbReference type="Rhea" id="RHEA-COMP:13180"/>
        <dbReference type="Rhea" id="RHEA-COMP:16897"/>
        <dbReference type="Rhea" id="RHEA-COMP:17067"/>
        <dbReference type="ChEBI" id="CHEBI:15378"/>
        <dbReference type="ChEBI" id="CHEBI:136412"/>
        <dbReference type="ChEBI" id="CHEBI:157695"/>
        <dbReference type="ChEBI" id="CHEBI:167181"/>
        <dbReference type="EC" id="4.2.99.18"/>
    </reaction>
</comment>
<comment type="cofactor">
    <cofactor evidence="2">
        <name>Zn(2+)</name>
        <dbReference type="ChEBI" id="CHEBI:29105"/>
    </cofactor>
    <text evidence="2">Binds 1 zinc ion per subunit.</text>
</comment>
<comment type="subunit">
    <text evidence="2">Monomer.</text>
</comment>
<comment type="similarity">
    <text evidence="2">Belongs to the FPG family.</text>
</comment>
<reference key="1">
    <citation type="submission" date="2008-02" db="EMBL/GenBank/DDBJ databases">
        <title>Complete sequence of Shewanella woodyi ATCC 51908.</title>
        <authorList>
            <consortium name="US DOE Joint Genome Institute"/>
            <person name="Copeland A."/>
            <person name="Lucas S."/>
            <person name="Lapidus A."/>
            <person name="Glavina del Rio T."/>
            <person name="Dalin E."/>
            <person name="Tice H."/>
            <person name="Bruce D."/>
            <person name="Goodwin L."/>
            <person name="Pitluck S."/>
            <person name="Sims D."/>
            <person name="Brettin T."/>
            <person name="Detter J.C."/>
            <person name="Han C."/>
            <person name="Kuske C.R."/>
            <person name="Schmutz J."/>
            <person name="Larimer F."/>
            <person name="Land M."/>
            <person name="Hauser L."/>
            <person name="Kyrpides N."/>
            <person name="Lykidis A."/>
            <person name="Zhao J.-S."/>
            <person name="Richardson P."/>
        </authorList>
    </citation>
    <scope>NUCLEOTIDE SEQUENCE [LARGE SCALE GENOMIC DNA]</scope>
    <source>
        <strain>ATCC 51908 / MS32</strain>
    </source>
</reference>
<evidence type="ECO:0000250" key="1"/>
<evidence type="ECO:0000255" key="2">
    <source>
        <dbReference type="HAMAP-Rule" id="MF_00103"/>
    </source>
</evidence>
<name>FPG_SHEWM</name>
<keyword id="KW-0227">DNA damage</keyword>
<keyword id="KW-0234">DNA repair</keyword>
<keyword id="KW-0238">DNA-binding</keyword>
<keyword id="KW-0326">Glycosidase</keyword>
<keyword id="KW-0378">Hydrolase</keyword>
<keyword id="KW-0456">Lyase</keyword>
<keyword id="KW-0479">Metal-binding</keyword>
<keyword id="KW-0511">Multifunctional enzyme</keyword>
<keyword id="KW-1185">Reference proteome</keyword>
<keyword id="KW-0862">Zinc</keyword>
<keyword id="KW-0863">Zinc-finger</keyword>
<gene>
    <name evidence="2" type="primary">mutM</name>
    <name evidence="2" type="synonym">fpg</name>
    <name type="ordered locus">Swoo_0078</name>
</gene>
<sequence>MPELPEVEVTRQGVSPYLIDQEVTGLTVRNASLRWPVPDLAQQIVGQTIRSVHRRAKYLLIDTDAGTTIVHLGMSGSLRVVTELTPVEKHDHIDLSLASGKILRFNDPRRFGAWLWYELPIDAHPLLSKLGPEPLTDAFNPSYLFESLKGKKKAIKLCLMDNHIVVGVGNIYANEALFAAGIHPQMEAGKVDQERLIILVSEVKQILANAIKQGGTTLKDFTNAEGKPGYFAQKLHVYGRGGESCTQCGNLLSEIKLGQRATVFCGLCQTR</sequence>
<protein>
    <recommendedName>
        <fullName evidence="2">Formamidopyrimidine-DNA glycosylase</fullName>
        <shortName evidence="2">Fapy-DNA glycosylase</shortName>
        <ecNumber evidence="2">3.2.2.23</ecNumber>
    </recommendedName>
    <alternativeName>
        <fullName evidence="2">DNA-(apurinic or apyrimidinic site) lyase MutM</fullName>
        <shortName evidence="2">AP lyase MutM</shortName>
        <ecNumber evidence="2">4.2.99.18</ecNumber>
    </alternativeName>
</protein>
<accession>B1KL38</accession>